<accession>Q9EYG9</accession>
<evidence type="ECO:0000255" key="1">
    <source>
        <dbReference type="HAMAP-Rule" id="MF_00558"/>
    </source>
</evidence>
<gene>
    <name evidence="1" type="primary">sucC</name>
    <name type="ordered locus">R03055</name>
    <name type="ORF">SMc02480</name>
</gene>
<protein>
    <recommendedName>
        <fullName evidence="1">Succinate--CoA ligase [ADP-forming] subunit beta</fullName>
        <ecNumber evidence="1">6.2.1.5</ecNumber>
    </recommendedName>
    <alternativeName>
        <fullName evidence="1">Succinyl-CoA synthetase subunit beta</fullName>
        <shortName evidence="1">SCS-beta</shortName>
    </alternativeName>
</protein>
<proteinExistence type="inferred from homology"/>
<name>SUCC_RHIME</name>
<feature type="chain" id="PRO_0000102847" description="Succinate--CoA ligase [ADP-forming] subunit beta">
    <location>
        <begin position="1"/>
        <end position="398"/>
    </location>
</feature>
<feature type="domain" description="ATP-grasp" evidence="1">
    <location>
        <begin position="9"/>
        <end position="254"/>
    </location>
</feature>
<feature type="binding site" evidence="1">
    <location>
        <position position="46"/>
    </location>
    <ligand>
        <name>ATP</name>
        <dbReference type="ChEBI" id="CHEBI:30616"/>
    </ligand>
</feature>
<feature type="binding site" evidence="1">
    <location>
        <begin position="53"/>
        <end position="55"/>
    </location>
    <ligand>
        <name>ATP</name>
        <dbReference type="ChEBI" id="CHEBI:30616"/>
    </ligand>
</feature>
<feature type="binding site" evidence="1">
    <location>
        <position position="109"/>
    </location>
    <ligand>
        <name>ATP</name>
        <dbReference type="ChEBI" id="CHEBI:30616"/>
    </ligand>
</feature>
<feature type="binding site" evidence="1">
    <location>
        <position position="112"/>
    </location>
    <ligand>
        <name>ATP</name>
        <dbReference type="ChEBI" id="CHEBI:30616"/>
    </ligand>
</feature>
<feature type="binding site" evidence="1">
    <location>
        <position position="117"/>
    </location>
    <ligand>
        <name>ATP</name>
        <dbReference type="ChEBI" id="CHEBI:30616"/>
    </ligand>
</feature>
<feature type="binding site" evidence="1">
    <location>
        <position position="209"/>
    </location>
    <ligand>
        <name>Mg(2+)</name>
        <dbReference type="ChEBI" id="CHEBI:18420"/>
    </ligand>
</feature>
<feature type="binding site" evidence="1">
    <location>
        <position position="223"/>
    </location>
    <ligand>
        <name>Mg(2+)</name>
        <dbReference type="ChEBI" id="CHEBI:18420"/>
    </ligand>
</feature>
<feature type="binding site" evidence="1">
    <location>
        <position position="274"/>
    </location>
    <ligand>
        <name>substrate</name>
        <note>ligand shared with subunit alpha</note>
    </ligand>
</feature>
<feature type="binding site" evidence="1">
    <location>
        <begin position="331"/>
        <end position="333"/>
    </location>
    <ligand>
        <name>substrate</name>
        <note>ligand shared with subunit alpha</note>
    </ligand>
</feature>
<sequence length="398" mass="42135">MNIHEYQAKALLKSYGAPVAEGVAIFSADEAEAAAKKLPGPLYVVKSQIHAGGRGKGKFKELGPDAKGGVRLAKSVDEVVANAKDMLGNTLVTKQTGPAGKQVNRLYIEDGADIDRELYLSILVDRSVGQVAFVVSTEGGMDIEAVAEHTPEKIVTVAIDPEKGVTAENLKTLADALKLEGEARADAEKLFPILYKAFVEKDMSLLEVNPLIVMTNGRMRVLDAKVSFDGNALFRHEDVVALRDTTEEDDKEIEASKYDLAYVALDGNIGCMVNGAGLAMATMDIIKLYGAEPANFLDVGGGASKEKVTQAFKIITADPAVKGILVNIFGGIMKCDVIAEGVLAAVKEVGLKVPLVVRLEGTNVELGKKIINESGLNVISADDLDDAAQKIVAAVKGA</sequence>
<organism>
    <name type="scientific">Rhizobium meliloti (strain 1021)</name>
    <name type="common">Ensifer meliloti</name>
    <name type="synonym">Sinorhizobium meliloti</name>
    <dbReference type="NCBI Taxonomy" id="266834"/>
    <lineage>
        <taxon>Bacteria</taxon>
        <taxon>Pseudomonadati</taxon>
        <taxon>Pseudomonadota</taxon>
        <taxon>Alphaproteobacteria</taxon>
        <taxon>Hyphomicrobiales</taxon>
        <taxon>Rhizobiaceae</taxon>
        <taxon>Sinorhizobium/Ensifer group</taxon>
        <taxon>Sinorhizobium</taxon>
    </lineage>
</organism>
<keyword id="KW-0067">ATP-binding</keyword>
<keyword id="KW-0436">Ligase</keyword>
<keyword id="KW-0460">Magnesium</keyword>
<keyword id="KW-0479">Metal-binding</keyword>
<keyword id="KW-0547">Nucleotide-binding</keyword>
<keyword id="KW-1185">Reference proteome</keyword>
<keyword id="KW-0816">Tricarboxylic acid cycle</keyword>
<comment type="function">
    <text evidence="1">Succinyl-CoA synthetase functions in the citric acid cycle (TCA), coupling the hydrolysis of succinyl-CoA to the synthesis of either ATP or GTP and thus represents the only step of substrate-level phosphorylation in the TCA. The beta subunit provides nucleotide specificity of the enzyme and binds the substrate succinate, while the binding sites for coenzyme A and phosphate are found in the alpha subunit.</text>
</comment>
<comment type="catalytic activity">
    <reaction evidence="1">
        <text>succinate + ATP + CoA = succinyl-CoA + ADP + phosphate</text>
        <dbReference type="Rhea" id="RHEA:17661"/>
        <dbReference type="ChEBI" id="CHEBI:30031"/>
        <dbReference type="ChEBI" id="CHEBI:30616"/>
        <dbReference type="ChEBI" id="CHEBI:43474"/>
        <dbReference type="ChEBI" id="CHEBI:57287"/>
        <dbReference type="ChEBI" id="CHEBI:57292"/>
        <dbReference type="ChEBI" id="CHEBI:456216"/>
        <dbReference type="EC" id="6.2.1.5"/>
    </reaction>
    <physiologicalReaction direction="right-to-left" evidence="1">
        <dbReference type="Rhea" id="RHEA:17663"/>
    </physiologicalReaction>
</comment>
<comment type="catalytic activity">
    <reaction evidence="1">
        <text>GTP + succinate + CoA = succinyl-CoA + GDP + phosphate</text>
        <dbReference type="Rhea" id="RHEA:22120"/>
        <dbReference type="ChEBI" id="CHEBI:30031"/>
        <dbReference type="ChEBI" id="CHEBI:37565"/>
        <dbReference type="ChEBI" id="CHEBI:43474"/>
        <dbReference type="ChEBI" id="CHEBI:57287"/>
        <dbReference type="ChEBI" id="CHEBI:57292"/>
        <dbReference type="ChEBI" id="CHEBI:58189"/>
    </reaction>
    <physiologicalReaction direction="right-to-left" evidence="1">
        <dbReference type="Rhea" id="RHEA:22122"/>
    </physiologicalReaction>
</comment>
<comment type="cofactor">
    <cofactor evidence="1">
        <name>Mg(2+)</name>
        <dbReference type="ChEBI" id="CHEBI:18420"/>
    </cofactor>
    <text evidence="1">Binds 1 Mg(2+) ion per subunit.</text>
</comment>
<comment type="pathway">
    <text evidence="1">Carbohydrate metabolism; tricarboxylic acid cycle; succinate from succinyl-CoA (ligase route): step 1/1.</text>
</comment>
<comment type="subunit">
    <text evidence="1">Heterotetramer of two alpha and two beta subunits.</text>
</comment>
<comment type="similarity">
    <text evidence="1">Belongs to the succinate/malate CoA ligase beta subunit family.</text>
</comment>
<dbReference type="EC" id="6.2.1.5" evidence="1"/>
<dbReference type="EMBL" id="AF326913">
    <property type="protein sequence ID" value="AAG42005.1"/>
    <property type="molecule type" value="Genomic_DNA"/>
</dbReference>
<dbReference type="EMBL" id="AL591688">
    <property type="protein sequence ID" value="CAC47634.1"/>
    <property type="molecule type" value="Genomic_DNA"/>
</dbReference>
<dbReference type="RefSeq" id="NP_387161.1">
    <property type="nucleotide sequence ID" value="NC_003047.1"/>
</dbReference>
<dbReference type="RefSeq" id="WP_003530260.1">
    <property type="nucleotide sequence ID" value="NC_003047.1"/>
</dbReference>
<dbReference type="SMR" id="Q9EYG9"/>
<dbReference type="EnsemblBacteria" id="CAC47634">
    <property type="protein sequence ID" value="CAC47634"/>
    <property type="gene ID" value="SMc02480"/>
</dbReference>
<dbReference type="KEGG" id="sme:SMc02480"/>
<dbReference type="PATRIC" id="fig|266834.11.peg.4589"/>
<dbReference type="eggNOG" id="COG0045">
    <property type="taxonomic scope" value="Bacteria"/>
</dbReference>
<dbReference type="HOGENOM" id="CLU_037430_0_2_5"/>
<dbReference type="OrthoDB" id="9802602at2"/>
<dbReference type="UniPathway" id="UPA00223">
    <property type="reaction ID" value="UER00999"/>
</dbReference>
<dbReference type="Proteomes" id="UP000001976">
    <property type="component" value="Chromosome"/>
</dbReference>
<dbReference type="GO" id="GO:0005829">
    <property type="term" value="C:cytosol"/>
    <property type="evidence" value="ECO:0007669"/>
    <property type="project" value="TreeGrafter"/>
</dbReference>
<dbReference type="GO" id="GO:0042709">
    <property type="term" value="C:succinate-CoA ligase complex"/>
    <property type="evidence" value="ECO:0007669"/>
    <property type="project" value="TreeGrafter"/>
</dbReference>
<dbReference type="GO" id="GO:0005524">
    <property type="term" value="F:ATP binding"/>
    <property type="evidence" value="ECO:0007669"/>
    <property type="project" value="UniProtKB-UniRule"/>
</dbReference>
<dbReference type="GO" id="GO:0000287">
    <property type="term" value="F:magnesium ion binding"/>
    <property type="evidence" value="ECO:0007669"/>
    <property type="project" value="UniProtKB-UniRule"/>
</dbReference>
<dbReference type="GO" id="GO:0004775">
    <property type="term" value="F:succinate-CoA ligase (ADP-forming) activity"/>
    <property type="evidence" value="ECO:0007669"/>
    <property type="project" value="UniProtKB-UniRule"/>
</dbReference>
<dbReference type="GO" id="GO:0004776">
    <property type="term" value="F:succinate-CoA ligase (GDP-forming) activity"/>
    <property type="evidence" value="ECO:0007669"/>
    <property type="project" value="RHEA"/>
</dbReference>
<dbReference type="GO" id="GO:0006104">
    <property type="term" value="P:succinyl-CoA metabolic process"/>
    <property type="evidence" value="ECO:0007669"/>
    <property type="project" value="TreeGrafter"/>
</dbReference>
<dbReference type="GO" id="GO:0006099">
    <property type="term" value="P:tricarboxylic acid cycle"/>
    <property type="evidence" value="ECO:0007669"/>
    <property type="project" value="UniProtKB-UniRule"/>
</dbReference>
<dbReference type="FunFam" id="3.30.1490.20:FF:000002">
    <property type="entry name" value="Succinate--CoA ligase [ADP-forming] subunit beta"/>
    <property type="match status" value="1"/>
</dbReference>
<dbReference type="FunFam" id="3.30.470.20:FF:000002">
    <property type="entry name" value="Succinate--CoA ligase [ADP-forming] subunit beta"/>
    <property type="match status" value="1"/>
</dbReference>
<dbReference type="FunFam" id="3.40.50.261:FF:000001">
    <property type="entry name" value="Succinate--CoA ligase [ADP-forming] subunit beta"/>
    <property type="match status" value="1"/>
</dbReference>
<dbReference type="Gene3D" id="3.30.1490.20">
    <property type="entry name" value="ATP-grasp fold, A domain"/>
    <property type="match status" value="1"/>
</dbReference>
<dbReference type="Gene3D" id="3.30.470.20">
    <property type="entry name" value="ATP-grasp fold, B domain"/>
    <property type="match status" value="1"/>
</dbReference>
<dbReference type="Gene3D" id="3.40.50.261">
    <property type="entry name" value="Succinyl-CoA synthetase domains"/>
    <property type="match status" value="1"/>
</dbReference>
<dbReference type="HAMAP" id="MF_00558">
    <property type="entry name" value="Succ_CoA_beta"/>
    <property type="match status" value="1"/>
</dbReference>
<dbReference type="InterPro" id="IPR011761">
    <property type="entry name" value="ATP-grasp"/>
</dbReference>
<dbReference type="InterPro" id="IPR013650">
    <property type="entry name" value="ATP-grasp_succ-CoA_synth-type"/>
</dbReference>
<dbReference type="InterPro" id="IPR013815">
    <property type="entry name" value="ATP_grasp_subdomain_1"/>
</dbReference>
<dbReference type="InterPro" id="IPR017866">
    <property type="entry name" value="Succ-CoA_synthase_bsu_CS"/>
</dbReference>
<dbReference type="InterPro" id="IPR005811">
    <property type="entry name" value="SUCC_ACL_C"/>
</dbReference>
<dbReference type="InterPro" id="IPR005809">
    <property type="entry name" value="Succ_CoA_ligase-like_bsu"/>
</dbReference>
<dbReference type="InterPro" id="IPR016102">
    <property type="entry name" value="Succinyl-CoA_synth-like"/>
</dbReference>
<dbReference type="NCBIfam" id="NF001913">
    <property type="entry name" value="PRK00696.1"/>
    <property type="match status" value="1"/>
</dbReference>
<dbReference type="NCBIfam" id="TIGR01016">
    <property type="entry name" value="sucCoAbeta"/>
    <property type="match status" value="1"/>
</dbReference>
<dbReference type="PANTHER" id="PTHR11815:SF10">
    <property type="entry name" value="SUCCINATE--COA LIGASE [GDP-FORMING] SUBUNIT BETA, MITOCHONDRIAL"/>
    <property type="match status" value="1"/>
</dbReference>
<dbReference type="PANTHER" id="PTHR11815">
    <property type="entry name" value="SUCCINYL-COA SYNTHETASE BETA CHAIN"/>
    <property type="match status" value="1"/>
</dbReference>
<dbReference type="Pfam" id="PF08442">
    <property type="entry name" value="ATP-grasp_2"/>
    <property type="match status" value="1"/>
</dbReference>
<dbReference type="Pfam" id="PF00549">
    <property type="entry name" value="Ligase_CoA"/>
    <property type="match status" value="1"/>
</dbReference>
<dbReference type="PIRSF" id="PIRSF001554">
    <property type="entry name" value="SucCS_beta"/>
    <property type="match status" value="1"/>
</dbReference>
<dbReference type="SUPFAM" id="SSF56059">
    <property type="entry name" value="Glutathione synthetase ATP-binding domain-like"/>
    <property type="match status" value="1"/>
</dbReference>
<dbReference type="SUPFAM" id="SSF52210">
    <property type="entry name" value="Succinyl-CoA synthetase domains"/>
    <property type="match status" value="1"/>
</dbReference>
<dbReference type="PROSITE" id="PS50975">
    <property type="entry name" value="ATP_GRASP"/>
    <property type="match status" value="1"/>
</dbReference>
<dbReference type="PROSITE" id="PS01217">
    <property type="entry name" value="SUCCINYL_COA_LIG_3"/>
    <property type="match status" value="1"/>
</dbReference>
<reference key="1">
    <citation type="submission" date="2000-12" db="EMBL/GenBank/DDBJ databases">
        <title>Isolation of a malate dehydrogenase mutant and genes encoding a putative TCA cycle operon of Sinorhizobium meliloti.</title>
        <authorList>
            <person name="Dymov S.I."/>
            <person name="Meek D.J."/>
            <person name="Driscoll B.T."/>
        </authorList>
    </citation>
    <scope>NUCLEOTIDE SEQUENCE [GENOMIC DNA]</scope>
</reference>
<reference key="2">
    <citation type="journal article" date="2001" name="Proc. Natl. Acad. Sci. U.S.A.">
        <title>Analysis of the chromosome sequence of the legume symbiont Sinorhizobium meliloti strain 1021.</title>
        <authorList>
            <person name="Capela D."/>
            <person name="Barloy-Hubler F."/>
            <person name="Gouzy J."/>
            <person name="Bothe G."/>
            <person name="Ampe F."/>
            <person name="Batut J."/>
            <person name="Boistard P."/>
            <person name="Becker A."/>
            <person name="Boutry M."/>
            <person name="Cadieu E."/>
            <person name="Dreano S."/>
            <person name="Gloux S."/>
            <person name="Godrie T."/>
            <person name="Goffeau A."/>
            <person name="Kahn D."/>
            <person name="Kiss E."/>
            <person name="Lelaure V."/>
            <person name="Masuy D."/>
            <person name="Pohl T."/>
            <person name="Portetelle D."/>
            <person name="Puehler A."/>
            <person name="Purnelle B."/>
            <person name="Ramsperger U."/>
            <person name="Renard C."/>
            <person name="Thebault P."/>
            <person name="Vandenbol M."/>
            <person name="Weidner S."/>
            <person name="Galibert F."/>
        </authorList>
    </citation>
    <scope>NUCLEOTIDE SEQUENCE [LARGE SCALE GENOMIC DNA]</scope>
    <source>
        <strain>1021</strain>
    </source>
</reference>
<reference key="3">
    <citation type="journal article" date="2001" name="Science">
        <title>The composite genome of the legume symbiont Sinorhizobium meliloti.</title>
        <authorList>
            <person name="Galibert F."/>
            <person name="Finan T.M."/>
            <person name="Long S.R."/>
            <person name="Puehler A."/>
            <person name="Abola P."/>
            <person name="Ampe F."/>
            <person name="Barloy-Hubler F."/>
            <person name="Barnett M.J."/>
            <person name="Becker A."/>
            <person name="Boistard P."/>
            <person name="Bothe G."/>
            <person name="Boutry M."/>
            <person name="Bowser L."/>
            <person name="Buhrmester J."/>
            <person name="Cadieu E."/>
            <person name="Capela D."/>
            <person name="Chain P."/>
            <person name="Cowie A."/>
            <person name="Davis R.W."/>
            <person name="Dreano S."/>
            <person name="Federspiel N.A."/>
            <person name="Fisher R.F."/>
            <person name="Gloux S."/>
            <person name="Godrie T."/>
            <person name="Goffeau A."/>
            <person name="Golding B."/>
            <person name="Gouzy J."/>
            <person name="Gurjal M."/>
            <person name="Hernandez-Lucas I."/>
            <person name="Hong A."/>
            <person name="Huizar L."/>
            <person name="Hyman R.W."/>
            <person name="Jones T."/>
            <person name="Kahn D."/>
            <person name="Kahn M.L."/>
            <person name="Kalman S."/>
            <person name="Keating D.H."/>
            <person name="Kiss E."/>
            <person name="Komp C."/>
            <person name="Lelaure V."/>
            <person name="Masuy D."/>
            <person name="Palm C."/>
            <person name="Peck M.C."/>
            <person name="Pohl T.M."/>
            <person name="Portetelle D."/>
            <person name="Purnelle B."/>
            <person name="Ramsperger U."/>
            <person name="Surzycki R."/>
            <person name="Thebault P."/>
            <person name="Vandenbol M."/>
            <person name="Vorhoelter F.J."/>
            <person name="Weidner S."/>
            <person name="Wells D.H."/>
            <person name="Wong K."/>
            <person name="Yeh K.-C."/>
            <person name="Batut J."/>
        </authorList>
    </citation>
    <scope>NUCLEOTIDE SEQUENCE [LARGE SCALE GENOMIC DNA]</scope>
    <source>
        <strain>1021</strain>
    </source>
</reference>